<evidence type="ECO:0000250" key="1"/>
<evidence type="ECO:0000250" key="2">
    <source>
        <dbReference type="UniProtKB" id="P53396"/>
    </source>
</evidence>
<evidence type="ECO:0000255" key="3"/>
<evidence type="ECO:0000305" key="4"/>
<keyword id="KW-0067">ATP-binding</keyword>
<keyword id="KW-0963">Cytoplasm</keyword>
<keyword id="KW-0444">Lipid biosynthesis</keyword>
<keyword id="KW-0443">Lipid metabolism</keyword>
<keyword id="KW-0460">Magnesium</keyword>
<keyword id="KW-0479">Metal-binding</keyword>
<keyword id="KW-0547">Nucleotide-binding</keyword>
<keyword id="KW-0597">Phosphoprotein</keyword>
<keyword id="KW-1185">Reference proteome</keyword>
<keyword id="KW-0808">Transferase</keyword>
<gene>
    <name type="primary">acly</name>
    <name type="ORF">DDB_G0278345</name>
</gene>
<proteinExistence type="evidence at protein level"/>
<sequence length="622" mass="67320">MTNSNFNHGNHGSNLPARLFTKQSQALIYNYKEAAVQRMLDFDNVSQRDTPSVGGLIHPGSDGGMYKAFFGFKELVIPVYNSVSEACQQCPNADVFLNFASHRSAYQSSLLALREPSIQTVVIIAEGVPENEARSLISIAKKLGKVIIGPATVGGIQAGCFKIGNTAGTIVYIMACKLYRSGSVGFVSKSGGLSNEMYNVLSRCTDGIYEGIAIGGDAFPGSTLTDHALRYEKLPEVQMIVILGELGGWDEYGIVEALKKGEITKPICAWVSGTVAKIFPTEVQFGHAGAKSGGETESADAKNKALREAGAVVPTSFEDFSNVIAATYAKLQSKGLVKPVEEPTPPELPLDFKTAVKAGKVRKPTSIISTICDDRGDELSYAGVPISEVCKEQYNMGDVIGLLWFKRKLPPYASKFFEMCLKLVADHGPCVSGAHNTIVAARAGKDLVSSLVSGLLTIGPRFGGAIDDSARVFQDAVDNNLQPSQFVEGMKSKGKRIPGIGHLIKSADEIDKRVVLLKDYAFTHFSSTKYLEYALEVEKYTLQKANNLILNVDGCIGVLFLDLLHSSGLFTQHEIKEIIDVGYLNGFFIVGRSVGLIGHALDQRRNKQGLYRHQADDVHYAL</sequence>
<organism>
    <name type="scientific">Dictyostelium discoideum</name>
    <name type="common">Social amoeba</name>
    <dbReference type="NCBI Taxonomy" id="44689"/>
    <lineage>
        <taxon>Eukaryota</taxon>
        <taxon>Amoebozoa</taxon>
        <taxon>Evosea</taxon>
        <taxon>Eumycetozoa</taxon>
        <taxon>Dictyostelia</taxon>
        <taxon>Dictyosteliales</taxon>
        <taxon>Dictyosteliaceae</taxon>
        <taxon>Dictyostelium</taxon>
    </lineage>
</organism>
<dbReference type="EC" id="2.3.3.8"/>
<dbReference type="EMBL" id="AAFI02000023">
    <property type="protein sequence ID" value="EAL68345.1"/>
    <property type="molecule type" value="Genomic_DNA"/>
</dbReference>
<dbReference type="RefSeq" id="XP_642302.1">
    <property type="nucleotide sequence ID" value="XM_637210.1"/>
</dbReference>
<dbReference type="SMR" id="Q54YA0"/>
<dbReference type="FunCoup" id="Q54YA0">
    <property type="interactions" value="779"/>
</dbReference>
<dbReference type="STRING" id="44689.Q54YA0"/>
<dbReference type="GlyGen" id="Q54YA0">
    <property type="glycosylation" value="1 site"/>
</dbReference>
<dbReference type="PaxDb" id="44689-DDB0235360"/>
<dbReference type="EnsemblProtists" id="EAL68345">
    <property type="protein sequence ID" value="EAL68345"/>
    <property type="gene ID" value="DDB_G0278345"/>
</dbReference>
<dbReference type="GeneID" id="8621508"/>
<dbReference type="KEGG" id="ddi:DDB_G0278345"/>
<dbReference type="dictyBase" id="DDB_G0278345">
    <property type="gene designation" value="acly"/>
</dbReference>
<dbReference type="VEuPathDB" id="AmoebaDB:DDB_G0278345"/>
<dbReference type="eggNOG" id="KOG1254">
    <property type="taxonomic scope" value="Eukaryota"/>
</dbReference>
<dbReference type="HOGENOM" id="CLU_006587_4_2_1"/>
<dbReference type="InParanoid" id="Q54YA0"/>
<dbReference type="OMA" id="HMLRYQA"/>
<dbReference type="PhylomeDB" id="Q54YA0"/>
<dbReference type="Reactome" id="R-DDI-6798695">
    <property type="pathway name" value="Neutrophil degranulation"/>
</dbReference>
<dbReference type="Reactome" id="R-DDI-75105">
    <property type="pathway name" value="Fatty acyl-CoA biosynthesis"/>
</dbReference>
<dbReference type="PRO" id="PR:Q54YA0"/>
<dbReference type="Proteomes" id="UP000002195">
    <property type="component" value="Chromosome 3"/>
</dbReference>
<dbReference type="GO" id="GO:0005829">
    <property type="term" value="C:cytosol"/>
    <property type="evidence" value="ECO:0000318"/>
    <property type="project" value="GO_Central"/>
</dbReference>
<dbReference type="GO" id="GO:0045335">
    <property type="term" value="C:phagocytic vesicle"/>
    <property type="evidence" value="ECO:0007005"/>
    <property type="project" value="dictyBase"/>
</dbReference>
<dbReference type="GO" id="GO:0005524">
    <property type="term" value="F:ATP binding"/>
    <property type="evidence" value="ECO:0007669"/>
    <property type="project" value="UniProtKB-KW"/>
</dbReference>
<dbReference type="GO" id="GO:0003878">
    <property type="term" value="F:ATP citrate synthase activity"/>
    <property type="evidence" value="ECO:0000318"/>
    <property type="project" value="GO_Central"/>
</dbReference>
<dbReference type="GO" id="GO:0046872">
    <property type="term" value="F:metal ion binding"/>
    <property type="evidence" value="ECO:0007669"/>
    <property type="project" value="UniProtKB-KW"/>
</dbReference>
<dbReference type="GO" id="GO:0006085">
    <property type="term" value="P:acetyl-CoA biosynthetic process"/>
    <property type="evidence" value="ECO:0000318"/>
    <property type="project" value="GO_Central"/>
</dbReference>
<dbReference type="GO" id="GO:0006633">
    <property type="term" value="P:fatty acid biosynthetic process"/>
    <property type="evidence" value="ECO:0000318"/>
    <property type="project" value="GO_Central"/>
</dbReference>
<dbReference type="CDD" id="cd06100">
    <property type="entry name" value="CCL_ACL-C"/>
    <property type="match status" value="1"/>
</dbReference>
<dbReference type="FunFam" id="3.40.50.261:FF:000003">
    <property type="entry name" value="ATP-citrate synthase subunit"/>
    <property type="match status" value="1"/>
</dbReference>
<dbReference type="Gene3D" id="1.10.580.10">
    <property type="entry name" value="Citrate Synthase, domain 1"/>
    <property type="match status" value="1"/>
</dbReference>
<dbReference type="Gene3D" id="1.10.230.10">
    <property type="entry name" value="Cytochrome P450-Terp, domain 2"/>
    <property type="match status" value="1"/>
</dbReference>
<dbReference type="Gene3D" id="3.40.50.720">
    <property type="entry name" value="NAD(P)-binding Rossmann-like Domain"/>
    <property type="match status" value="1"/>
</dbReference>
<dbReference type="Gene3D" id="3.40.50.261">
    <property type="entry name" value="Succinyl-CoA synthetase domains"/>
    <property type="match status" value="1"/>
</dbReference>
<dbReference type="InterPro" id="IPR017440">
    <property type="entry name" value="Cit_synth/succinyl-CoA_lig_AS"/>
</dbReference>
<dbReference type="InterPro" id="IPR016142">
    <property type="entry name" value="Citrate_synth-like_lrg_a-sub"/>
</dbReference>
<dbReference type="InterPro" id="IPR016143">
    <property type="entry name" value="Citrate_synth-like_sm_a-sub"/>
</dbReference>
<dbReference type="InterPro" id="IPR002020">
    <property type="entry name" value="Citrate_synthase"/>
</dbReference>
<dbReference type="InterPro" id="IPR036969">
    <property type="entry name" value="Citrate_synthase_sf"/>
</dbReference>
<dbReference type="InterPro" id="IPR033847">
    <property type="entry name" value="Citrt_syn/SCS-alpha_CS"/>
</dbReference>
<dbReference type="InterPro" id="IPR036291">
    <property type="entry name" value="NAD(P)-bd_dom_sf"/>
</dbReference>
<dbReference type="InterPro" id="IPR017866">
    <property type="entry name" value="Succ-CoA_synthase_bsu_CS"/>
</dbReference>
<dbReference type="InterPro" id="IPR005811">
    <property type="entry name" value="SUCC_ACL_C"/>
</dbReference>
<dbReference type="InterPro" id="IPR016102">
    <property type="entry name" value="Succinyl-CoA_synth-like"/>
</dbReference>
<dbReference type="PANTHER" id="PTHR23118">
    <property type="entry name" value="ATP-CITRATE SYNTHASE"/>
    <property type="match status" value="1"/>
</dbReference>
<dbReference type="PANTHER" id="PTHR23118:SF42">
    <property type="entry name" value="ATP-CITRATE SYNTHASE"/>
    <property type="match status" value="1"/>
</dbReference>
<dbReference type="Pfam" id="PF00285">
    <property type="entry name" value="Citrate_synt"/>
    <property type="match status" value="1"/>
</dbReference>
<dbReference type="Pfam" id="PF00549">
    <property type="entry name" value="Ligase_CoA"/>
    <property type="match status" value="1"/>
</dbReference>
<dbReference type="PRINTS" id="PR01798">
    <property type="entry name" value="SCOASYNTHASE"/>
</dbReference>
<dbReference type="SUPFAM" id="SSF48256">
    <property type="entry name" value="Citrate synthase"/>
    <property type="match status" value="1"/>
</dbReference>
<dbReference type="SUPFAM" id="SSF51735">
    <property type="entry name" value="NAD(P)-binding Rossmann-fold domains"/>
    <property type="match status" value="1"/>
</dbReference>
<dbReference type="PROSITE" id="PS01216">
    <property type="entry name" value="SUCCINYL_COA_LIG_1"/>
    <property type="match status" value="1"/>
</dbReference>
<dbReference type="PROSITE" id="PS00399">
    <property type="entry name" value="SUCCINYL_COA_LIG_2"/>
    <property type="match status" value="1"/>
</dbReference>
<dbReference type="PROSITE" id="PS01217">
    <property type="entry name" value="SUCCINYL_COA_LIG_3"/>
    <property type="match status" value="1"/>
</dbReference>
<feature type="chain" id="PRO_0000342146" description="Probable ATP-citrate synthase">
    <location>
        <begin position="1"/>
        <end position="622"/>
    </location>
</feature>
<feature type="active site" description="Tele-phosphohistidine intermediate" evidence="1">
    <location>
        <position position="287"/>
    </location>
</feature>
<feature type="binding site" evidence="1">
    <location>
        <begin position="228"/>
        <end position="248"/>
    </location>
    <ligand>
        <name>ATP</name>
        <dbReference type="ChEBI" id="CHEBI:30616"/>
    </ligand>
</feature>
<feature type="binding site" evidence="1">
    <location>
        <position position="245"/>
    </location>
    <ligand>
        <name>Mg(2+)</name>
        <dbReference type="ChEBI" id="CHEBI:18420"/>
    </ligand>
</feature>
<feature type="binding site" evidence="1">
    <location>
        <begin position="279"/>
        <end position="305"/>
    </location>
    <ligand>
        <name>ATP</name>
        <dbReference type="ChEBI" id="CHEBI:30616"/>
    </ligand>
</feature>
<feature type="binding site" evidence="3">
    <location>
        <begin position="306"/>
        <end position="316"/>
    </location>
    <ligand>
        <name>CoA</name>
        <dbReference type="ChEBI" id="CHEBI:57287"/>
    </ligand>
</feature>
<reference key="1">
    <citation type="journal article" date="2005" name="Nature">
        <title>The genome of the social amoeba Dictyostelium discoideum.</title>
        <authorList>
            <person name="Eichinger L."/>
            <person name="Pachebat J.A."/>
            <person name="Gloeckner G."/>
            <person name="Rajandream M.A."/>
            <person name="Sucgang R."/>
            <person name="Berriman M."/>
            <person name="Song J."/>
            <person name="Olsen R."/>
            <person name="Szafranski K."/>
            <person name="Xu Q."/>
            <person name="Tunggal B."/>
            <person name="Kummerfeld S."/>
            <person name="Madera M."/>
            <person name="Konfortov B.A."/>
            <person name="Rivero F."/>
            <person name="Bankier A.T."/>
            <person name="Lehmann R."/>
            <person name="Hamlin N."/>
            <person name="Davies R."/>
            <person name="Gaudet P."/>
            <person name="Fey P."/>
            <person name="Pilcher K."/>
            <person name="Chen G."/>
            <person name="Saunders D."/>
            <person name="Sodergren E.J."/>
            <person name="Davis P."/>
            <person name="Kerhornou A."/>
            <person name="Nie X."/>
            <person name="Hall N."/>
            <person name="Anjard C."/>
            <person name="Hemphill L."/>
            <person name="Bason N."/>
            <person name="Farbrother P."/>
            <person name="Desany B."/>
            <person name="Just E."/>
            <person name="Morio T."/>
            <person name="Rost R."/>
            <person name="Churcher C.M."/>
            <person name="Cooper J."/>
            <person name="Haydock S."/>
            <person name="van Driessche N."/>
            <person name="Cronin A."/>
            <person name="Goodhead I."/>
            <person name="Muzny D.M."/>
            <person name="Mourier T."/>
            <person name="Pain A."/>
            <person name="Lu M."/>
            <person name="Harper D."/>
            <person name="Lindsay R."/>
            <person name="Hauser H."/>
            <person name="James K.D."/>
            <person name="Quiles M."/>
            <person name="Madan Babu M."/>
            <person name="Saito T."/>
            <person name="Buchrieser C."/>
            <person name="Wardroper A."/>
            <person name="Felder M."/>
            <person name="Thangavelu M."/>
            <person name="Johnson D."/>
            <person name="Knights A."/>
            <person name="Loulseged H."/>
            <person name="Mungall K.L."/>
            <person name="Oliver K."/>
            <person name="Price C."/>
            <person name="Quail M.A."/>
            <person name="Urushihara H."/>
            <person name="Hernandez J."/>
            <person name="Rabbinowitsch E."/>
            <person name="Steffen D."/>
            <person name="Sanders M."/>
            <person name="Ma J."/>
            <person name="Kohara Y."/>
            <person name="Sharp S."/>
            <person name="Simmonds M.N."/>
            <person name="Spiegler S."/>
            <person name="Tivey A."/>
            <person name="Sugano S."/>
            <person name="White B."/>
            <person name="Walker D."/>
            <person name="Woodward J.R."/>
            <person name="Winckler T."/>
            <person name="Tanaka Y."/>
            <person name="Shaulsky G."/>
            <person name="Schleicher M."/>
            <person name="Weinstock G.M."/>
            <person name="Rosenthal A."/>
            <person name="Cox E.C."/>
            <person name="Chisholm R.L."/>
            <person name="Gibbs R.A."/>
            <person name="Loomis W.F."/>
            <person name="Platzer M."/>
            <person name="Kay R.R."/>
            <person name="Williams J.G."/>
            <person name="Dear P.H."/>
            <person name="Noegel A.A."/>
            <person name="Barrell B.G."/>
            <person name="Kuspa A."/>
        </authorList>
    </citation>
    <scope>NUCLEOTIDE SEQUENCE [LARGE SCALE GENOMIC DNA]</scope>
    <source>
        <strain>AX4</strain>
    </source>
</reference>
<reference key="2">
    <citation type="journal article" date="2006" name="Mol. Cell. Proteomics">
        <title>Proteomics fingerprinting of phagosome maturation and evidence for the role of a Galpha during uptake.</title>
        <authorList>
            <person name="Gotthardt D."/>
            <person name="Blancheteau V."/>
            <person name="Bosserhoff A."/>
            <person name="Ruppert T."/>
            <person name="Delorenzi M."/>
            <person name="Soldati T."/>
        </authorList>
    </citation>
    <scope>IDENTIFICATION BY MASS SPECTROMETRY [LARGE SCALE ANALYSIS]</scope>
    <source>
        <strain>AX2</strain>
    </source>
</reference>
<accession>Q54YA0</accession>
<comment type="function">
    <text evidence="2">Catalyzes the cleavage of citrate into oxaloacetate and acetyl-CoA, the latter serving as common substrate in multiple biochemical reactions in protein, carbohydrate and lipid metabolism.</text>
</comment>
<comment type="catalytic activity">
    <reaction>
        <text>oxaloacetate + acetyl-CoA + ADP + phosphate = citrate + ATP + CoA</text>
        <dbReference type="Rhea" id="RHEA:21160"/>
        <dbReference type="ChEBI" id="CHEBI:16452"/>
        <dbReference type="ChEBI" id="CHEBI:16947"/>
        <dbReference type="ChEBI" id="CHEBI:30616"/>
        <dbReference type="ChEBI" id="CHEBI:43474"/>
        <dbReference type="ChEBI" id="CHEBI:57287"/>
        <dbReference type="ChEBI" id="CHEBI:57288"/>
        <dbReference type="ChEBI" id="CHEBI:456216"/>
        <dbReference type="EC" id="2.3.3.8"/>
    </reaction>
</comment>
<comment type="subunit">
    <text evidence="1">Homotetramer.</text>
</comment>
<comment type="subcellular location">
    <subcellularLocation>
        <location evidence="1">Cytoplasm</location>
    </subcellularLocation>
</comment>
<comment type="similarity">
    <text evidence="4">In the N-terminal section; belongs to the succinate/malate CoA ligase beta subunit family.</text>
</comment>
<comment type="similarity">
    <text evidence="4">In the C-terminal section; belongs to the succinate/malate CoA ligase alpha subunit family.</text>
</comment>
<name>ACLY_DICDI</name>
<protein>
    <recommendedName>
        <fullName>Probable ATP-citrate synthase</fullName>
        <ecNumber>2.3.3.8</ecNumber>
    </recommendedName>
    <alternativeName>
        <fullName>ATP-citrate (pro-S-)-lyase</fullName>
    </alternativeName>
    <alternativeName>
        <fullName>Citrate cleavage enzyme</fullName>
    </alternativeName>
</protein>